<sequence>MAHKKGTGSTRNGRDSNSKRLGVKAYGGETVTAGSILIRQRGTSVLPGVNVGQGKDDTLFALTDGVVTFESIRRSLRNRKRISVVASS</sequence>
<feature type="chain" id="PRO_1000017550" description="Large ribosomal subunit protein bL27">
    <location>
        <begin position="1"/>
        <end position="88"/>
    </location>
</feature>
<feature type="region of interest" description="Disordered" evidence="2">
    <location>
        <begin position="1"/>
        <end position="24"/>
    </location>
</feature>
<proteinExistence type="inferred from homology"/>
<comment type="similarity">
    <text evidence="1">Belongs to the bacterial ribosomal protein bL27 family.</text>
</comment>
<dbReference type="EMBL" id="CP000554">
    <property type="protein sequence ID" value="ABM77292.1"/>
    <property type="molecule type" value="Genomic_DNA"/>
</dbReference>
<dbReference type="RefSeq" id="WP_011825214.1">
    <property type="nucleotide sequence ID" value="NC_008820.1"/>
</dbReference>
<dbReference type="SMR" id="A2C732"/>
<dbReference type="STRING" id="59922.P9303_05401"/>
<dbReference type="KEGG" id="pmf:P9303_05401"/>
<dbReference type="HOGENOM" id="CLU_095424_4_0_3"/>
<dbReference type="BioCyc" id="PMAR59922:G1G80-496-MONOMER"/>
<dbReference type="Proteomes" id="UP000002274">
    <property type="component" value="Chromosome"/>
</dbReference>
<dbReference type="GO" id="GO:0022625">
    <property type="term" value="C:cytosolic large ribosomal subunit"/>
    <property type="evidence" value="ECO:0007669"/>
    <property type="project" value="TreeGrafter"/>
</dbReference>
<dbReference type="GO" id="GO:0003735">
    <property type="term" value="F:structural constituent of ribosome"/>
    <property type="evidence" value="ECO:0007669"/>
    <property type="project" value="InterPro"/>
</dbReference>
<dbReference type="GO" id="GO:0006412">
    <property type="term" value="P:translation"/>
    <property type="evidence" value="ECO:0007669"/>
    <property type="project" value="UniProtKB-UniRule"/>
</dbReference>
<dbReference type="FunFam" id="2.40.50.100:FF:000004">
    <property type="entry name" value="50S ribosomal protein L27"/>
    <property type="match status" value="1"/>
</dbReference>
<dbReference type="Gene3D" id="2.40.50.100">
    <property type="match status" value="1"/>
</dbReference>
<dbReference type="HAMAP" id="MF_00539">
    <property type="entry name" value="Ribosomal_bL27"/>
    <property type="match status" value="1"/>
</dbReference>
<dbReference type="InterPro" id="IPR001684">
    <property type="entry name" value="Ribosomal_bL27"/>
</dbReference>
<dbReference type="InterPro" id="IPR018261">
    <property type="entry name" value="Ribosomal_bL27_CS"/>
</dbReference>
<dbReference type="NCBIfam" id="TIGR00062">
    <property type="entry name" value="L27"/>
    <property type="match status" value="1"/>
</dbReference>
<dbReference type="PANTHER" id="PTHR15893:SF0">
    <property type="entry name" value="LARGE RIBOSOMAL SUBUNIT PROTEIN BL27M"/>
    <property type="match status" value="1"/>
</dbReference>
<dbReference type="PANTHER" id="PTHR15893">
    <property type="entry name" value="RIBOSOMAL PROTEIN L27"/>
    <property type="match status" value="1"/>
</dbReference>
<dbReference type="Pfam" id="PF01016">
    <property type="entry name" value="Ribosomal_L27"/>
    <property type="match status" value="1"/>
</dbReference>
<dbReference type="PRINTS" id="PR00063">
    <property type="entry name" value="RIBOSOMALL27"/>
</dbReference>
<dbReference type="SUPFAM" id="SSF110324">
    <property type="entry name" value="Ribosomal L27 protein-like"/>
    <property type="match status" value="1"/>
</dbReference>
<dbReference type="PROSITE" id="PS00831">
    <property type="entry name" value="RIBOSOMAL_L27"/>
    <property type="match status" value="1"/>
</dbReference>
<name>RL27_PROM3</name>
<protein>
    <recommendedName>
        <fullName evidence="1">Large ribosomal subunit protein bL27</fullName>
    </recommendedName>
    <alternativeName>
        <fullName evidence="3">50S ribosomal protein L27</fullName>
    </alternativeName>
</protein>
<keyword id="KW-0687">Ribonucleoprotein</keyword>
<keyword id="KW-0689">Ribosomal protein</keyword>
<evidence type="ECO:0000255" key="1">
    <source>
        <dbReference type="HAMAP-Rule" id="MF_00539"/>
    </source>
</evidence>
<evidence type="ECO:0000256" key="2">
    <source>
        <dbReference type="SAM" id="MobiDB-lite"/>
    </source>
</evidence>
<evidence type="ECO:0000305" key="3"/>
<accession>A2C732</accession>
<organism>
    <name type="scientific">Prochlorococcus marinus (strain MIT 9303)</name>
    <dbReference type="NCBI Taxonomy" id="59922"/>
    <lineage>
        <taxon>Bacteria</taxon>
        <taxon>Bacillati</taxon>
        <taxon>Cyanobacteriota</taxon>
        <taxon>Cyanophyceae</taxon>
        <taxon>Synechococcales</taxon>
        <taxon>Prochlorococcaceae</taxon>
        <taxon>Prochlorococcus</taxon>
    </lineage>
</organism>
<reference key="1">
    <citation type="journal article" date="2007" name="PLoS Genet.">
        <title>Patterns and implications of gene gain and loss in the evolution of Prochlorococcus.</title>
        <authorList>
            <person name="Kettler G.C."/>
            <person name="Martiny A.C."/>
            <person name="Huang K."/>
            <person name="Zucker J."/>
            <person name="Coleman M.L."/>
            <person name="Rodrigue S."/>
            <person name="Chen F."/>
            <person name="Lapidus A."/>
            <person name="Ferriera S."/>
            <person name="Johnson J."/>
            <person name="Steglich C."/>
            <person name="Church G.M."/>
            <person name="Richardson P."/>
            <person name="Chisholm S.W."/>
        </authorList>
    </citation>
    <scope>NUCLEOTIDE SEQUENCE [LARGE SCALE GENOMIC DNA]</scope>
    <source>
        <strain>MIT 9303</strain>
    </source>
</reference>
<gene>
    <name evidence="1" type="primary">rpmA</name>
    <name evidence="1" type="synonym">rpl27</name>
    <name type="ordered locus">P9303_05401</name>
</gene>